<evidence type="ECO:0000255" key="1">
    <source>
        <dbReference type="HAMAP-Rule" id="MF_00145"/>
    </source>
</evidence>
<name>PGK_BIFAA</name>
<sequence length="401" mass="42090">MKTLKDLGDLKGKRVLVRADFNVPLDGTTITDDGRIKAALPTIKALREQGAKVILMAHLGRPKGKVVPELSLAPVAARLGELLGITVPLAADTYGEDAQAKVAAMSDGDVVLLQNVRFNPEETSKDPEERAAYAKKIAALGEVFVSDGFGVVHRAQGSNYDVAADLPAAAGLLVEKEVKALSRATVNPERPLTVVLGGSKVSDKLGVIDNLLDKANRLVIGGGMAYTFLKAKGYEVGTSLLEEDQIETVKGYMERAEKNGVELVLPTDVVINPVFPKSDEDIAPEVVAADAIPADKMGLDIGPESQKLFHDKIVDSKTVVWNGPMGVFEVPTFAEGTKAVAQALVDATAAGAFTIVGGGDSASAVRNLGFPEDGFSHISTGGGASLEFLEGKELPGLKVLD</sequence>
<dbReference type="EC" id="2.7.2.3" evidence="1"/>
<dbReference type="EMBL" id="AP009256">
    <property type="protein sequence ID" value="BAF39616.1"/>
    <property type="molecule type" value="Genomic_DNA"/>
</dbReference>
<dbReference type="RefSeq" id="WP_003809203.1">
    <property type="nucleotide sequence ID" value="NC_008618.1"/>
</dbReference>
<dbReference type="SMR" id="A1A1N3"/>
<dbReference type="STRING" id="367928.BAD_0835"/>
<dbReference type="PaxDb" id="1680-BADO_0888"/>
<dbReference type="GeneID" id="4556563"/>
<dbReference type="KEGG" id="bad:BAD_0835"/>
<dbReference type="HOGENOM" id="CLU_025427_0_2_11"/>
<dbReference type="UniPathway" id="UPA00109">
    <property type="reaction ID" value="UER00185"/>
</dbReference>
<dbReference type="Proteomes" id="UP000008702">
    <property type="component" value="Chromosome"/>
</dbReference>
<dbReference type="GO" id="GO:0005829">
    <property type="term" value="C:cytosol"/>
    <property type="evidence" value="ECO:0007669"/>
    <property type="project" value="TreeGrafter"/>
</dbReference>
<dbReference type="GO" id="GO:0043531">
    <property type="term" value="F:ADP binding"/>
    <property type="evidence" value="ECO:0007669"/>
    <property type="project" value="TreeGrafter"/>
</dbReference>
<dbReference type="GO" id="GO:0005524">
    <property type="term" value="F:ATP binding"/>
    <property type="evidence" value="ECO:0007669"/>
    <property type="project" value="UniProtKB-KW"/>
</dbReference>
<dbReference type="GO" id="GO:0004618">
    <property type="term" value="F:phosphoglycerate kinase activity"/>
    <property type="evidence" value="ECO:0007669"/>
    <property type="project" value="UniProtKB-UniRule"/>
</dbReference>
<dbReference type="GO" id="GO:0006094">
    <property type="term" value="P:gluconeogenesis"/>
    <property type="evidence" value="ECO:0007669"/>
    <property type="project" value="TreeGrafter"/>
</dbReference>
<dbReference type="GO" id="GO:0006096">
    <property type="term" value="P:glycolytic process"/>
    <property type="evidence" value="ECO:0007669"/>
    <property type="project" value="UniProtKB-UniRule"/>
</dbReference>
<dbReference type="CDD" id="cd00318">
    <property type="entry name" value="Phosphoglycerate_kinase"/>
    <property type="match status" value="1"/>
</dbReference>
<dbReference type="FunFam" id="3.40.50.1260:FF:000003">
    <property type="entry name" value="Phosphoglycerate kinase"/>
    <property type="match status" value="1"/>
</dbReference>
<dbReference type="FunFam" id="3.40.50.1260:FF:000006">
    <property type="entry name" value="Phosphoglycerate kinase"/>
    <property type="match status" value="1"/>
</dbReference>
<dbReference type="Gene3D" id="3.40.50.1260">
    <property type="entry name" value="Phosphoglycerate kinase, N-terminal domain"/>
    <property type="match status" value="2"/>
</dbReference>
<dbReference type="HAMAP" id="MF_00145">
    <property type="entry name" value="Phosphoglyc_kinase"/>
    <property type="match status" value="1"/>
</dbReference>
<dbReference type="InterPro" id="IPR001576">
    <property type="entry name" value="Phosphoglycerate_kinase"/>
</dbReference>
<dbReference type="InterPro" id="IPR015911">
    <property type="entry name" value="Phosphoglycerate_kinase_CS"/>
</dbReference>
<dbReference type="InterPro" id="IPR015824">
    <property type="entry name" value="Phosphoglycerate_kinase_N"/>
</dbReference>
<dbReference type="InterPro" id="IPR036043">
    <property type="entry name" value="Phosphoglycerate_kinase_sf"/>
</dbReference>
<dbReference type="PANTHER" id="PTHR11406">
    <property type="entry name" value="PHOSPHOGLYCERATE KINASE"/>
    <property type="match status" value="1"/>
</dbReference>
<dbReference type="PANTHER" id="PTHR11406:SF23">
    <property type="entry name" value="PHOSPHOGLYCERATE KINASE 1, CHLOROPLASTIC-RELATED"/>
    <property type="match status" value="1"/>
</dbReference>
<dbReference type="Pfam" id="PF00162">
    <property type="entry name" value="PGK"/>
    <property type="match status" value="1"/>
</dbReference>
<dbReference type="PIRSF" id="PIRSF000724">
    <property type="entry name" value="Pgk"/>
    <property type="match status" value="1"/>
</dbReference>
<dbReference type="PRINTS" id="PR00477">
    <property type="entry name" value="PHGLYCKINASE"/>
</dbReference>
<dbReference type="SUPFAM" id="SSF53748">
    <property type="entry name" value="Phosphoglycerate kinase"/>
    <property type="match status" value="1"/>
</dbReference>
<dbReference type="PROSITE" id="PS00111">
    <property type="entry name" value="PGLYCERATE_KINASE"/>
    <property type="match status" value="1"/>
</dbReference>
<comment type="catalytic activity">
    <reaction evidence="1">
        <text>(2R)-3-phosphoglycerate + ATP = (2R)-3-phospho-glyceroyl phosphate + ADP</text>
        <dbReference type="Rhea" id="RHEA:14801"/>
        <dbReference type="ChEBI" id="CHEBI:30616"/>
        <dbReference type="ChEBI" id="CHEBI:57604"/>
        <dbReference type="ChEBI" id="CHEBI:58272"/>
        <dbReference type="ChEBI" id="CHEBI:456216"/>
        <dbReference type="EC" id="2.7.2.3"/>
    </reaction>
</comment>
<comment type="pathway">
    <text evidence="1">Carbohydrate degradation; glycolysis; pyruvate from D-glyceraldehyde 3-phosphate: step 2/5.</text>
</comment>
<comment type="subunit">
    <text evidence="1">Monomer.</text>
</comment>
<comment type="subcellular location">
    <subcellularLocation>
        <location evidence="1">Cytoplasm</location>
    </subcellularLocation>
</comment>
<comment type="similarity">
    <text evidence="1">Belongs to the phosphoglycerate kinase family.</text>
</comment>
<feature type="chain" id="PRO_1000076581" description="Phosphoglycerate kinase">
    <location>
        <begin position="1"/>
        <end position="401"/>
    </location>
</feature>
<feature type="binding site" evidence="1">
    <location>
        <begin position="20"/>
        <end position="22"/>
    </location>
    <ligand>
        <name>substrate</name>
    </ligand>
</feature>
<feature type="binding site" evidence="1">
    <location>
        <position position="35"/>
    </location>
    <ligand>
        <name>substrate</name>
    </ligand>
</feature>
<feature type="binding site" evidence="1">
    <location>
        <begin position="58"/>
        <end position="61"/>
    </location>
    <ligand>
        <name>substrate</name>
    </ligand>
</feature>
<feature type="binding site" evidence="1">
    <location>
        <position position="117"/>
    </location>
    <ligand>
        <name>substrate</name>
    </ligand>
</feature>
<feature type="binding site" evidence="1">
    <location>
        <position position="154"/>
    </location>
    <ligand>
        <name>substrate</name>
    </ligand>
</feature>
<feature type="binding site" evidence="1">
    <location>
        <position position="204"/>
    </location>
    <ligand>
        <name>ATP</name>
        <dbReference type="ChEBI" id="CHEBI:30616"/>
    </ligand>
</feature>
<feature type="binding site" evidence="1">
    <location>
        <position position="298"/>
    </location>
    <ligand>
        <name>ATP</name>
        <dbReference type="ChEBI" id="CHEBI:30616"/>
    </ligand>
</feature>
<feature type="binding site" evidence="1">
    <location>
        <position position="329"/>
    </location>
    <ligand>
        <name>ATP</name>
        <dbReference type="ChEBI" id="CHEBI:30616"/>
    </ligand>
</feature>
<feature type="binding site" evidence="1">
    <location>
        <begin position="358"/>
        <end position="361"/>
    </location>
    <ligand>
        <name>ATP</name>
        <dbReference type="ChEBI" id="CHEBI:30616"/>
    </ligand>
</feature>
<proteinExistence type="inferred from homology"/>
<organism>
    <name type="scientific">Bifidobacterium adolescentis (strain ATCC 15703 / DSM 20083 / NCTC 11814 / E194a)</name>
    <dbReference type="NCBI Taxonomy" id="367928"/>
    <lineage>
        <taxon>Bacteria</taxon>
        <taxon>Bacillati</taxon>
        <taxon>Actinomycetota</taxon>
        <taxon>Actinomycetes</taxon>
        <taxon>Bifidobacteriales</taxon>
        <taxon>Bifidobacteriaceae</taxon>
        <taxon>Bifidobacterium</taxon>
    </lineage>
</organism>
<reference key="1">
    <citation type="submission" date="2006-12" db="EMBL/GenBank/DDBJ databases">
        <title>Bifidobacterium adolescentis complete genome sequence.</title>
        <authorList>
            <person name="Suzuki T."/>
            <person name="Tsuda Y."/>
            <person name="Kanou N."/>
            <person name="Inoue T."/>
            <person name="Kumazaki K."/>
            <person name="Nagano S."/>
            <person name="Hirai S."/>
            <person name="Tanaka K."/>
            <person name="Watanabe K."/>
        </authorList>
    </citation>
    <scope>NUCLEOTIDE SEQUENCE [LARGE SCALE GENOMIC DNA]</scope>
    <source>
        <strain>ATCC 15703 / DSM 20083 / NCTC 11814 / E194a</strain>
    </source>
</reference>
<accession>A1A1N3</accession>
<keyword id="KW-0067">ATP-binding</keyword>
<keyword id="KW-0963">Cytoplasm</keyword>
<keyword id="KW-0324">Glycolysis</keyword>
<keyword id="KW-0418">Kinase</keyword>
<keyword id="KW-0547">Nucleotide-binding</keyword>
<keyword id="KW-1185">Reference proteome</keyword>
<keyword id="KW-0808">Transferase</keyword>
<protein>
    <recommendedName>
        <fullName evidence="1">Phosphoglycerate kinase</fullName>
        <ecNumber evidence="1">2.7.2.3</ecNumber>
    </recommendedName>
</protein>
<gene>
    <name evidence="1" type="primary">pgk</name>
    <name type="ordered locus">BAD_0835</name>
</gene>